<comment type="function">
    <text evidence="1">The heterodimer acts as both an ATP-dependent DNA helicase and an ATP-dependent, dual-direction single-stranded exonuclease. Recognizes the chi site generating a DNA molecule suitable for the initiation of homologous recombination. The AddA nuclease domain is required for chi fragment generation; this subunit has the helicase and 3' -&gt; 5' nuclease activities.</text>
</comment>
<comment type="catalytic activity">
    <reaction evidence="1">
        <text>Couples ATP hydrolysis with the unwinding of duplex DNA by translocating in the 3'-5' direction.</text>
        <dbReference type="EC" id="5.6.2.4"/>
    </reaction>
</comment>
<comment type="catalytic activity">
    <reaction evidence="1">
        <text>ATP + H2O = ADP + phosphate + H(+)</text>
        <dbReference type="Rhea" id="RHEA:13065"/>
        <dbReference type="ChEBI" id="CHEBI:15377"/>
        <dbReference type="ChEBI" id="CHEBI:15378"/>
        <dbReference type="ChEBI" id="CHEBI:30616"/>
        <dbReference type="ChEBI" id="CHEBI:43474"/>
        <dbReference type="ChEBI" id="CHEBI:456216"/>
        <dbReference type="EC" id="5.6.2.4"/>
    </reaction>
</comment>
<comment type="cofactor">
    <cofactor evidence="1">
        <name>Mg(2+)</name>
        <dbReference type="ChEBI" id="CHEBI:18420"/>
    </cofactor>
</comment>
<comment type="subunit">
    <text evidence="1">Heterodimer of AddA and AddB/RexB.</text>
</comment>
<comment type="similarity">
    <text evidence="1">Belongs to the helicase family. AddA subfamily.</text>
</comment>
<dbReference type="EC" id="3.1.-.-" evidence="1"/>
<dbReference type="EC" id="5.6.2.4" evidence="1"/>
<dbReference type="EMBL" id="AP008934">
    <property type="protein sequence ID" value="BAE18953.1"/>
    <property type="molecule type" value="Genomic_DNA"/>
</dbReference>
<dbReference type="SMR" id="Q49WA6"/>
<dbReference type="KEGG" id="ssp:SSP1808"/>
<dbReference type="eggNOG" id="COG1074">
    <property type="taxonomic scope" value="Bacteria"/>
</dbReference>
<dbReference type="HOGENOM" id="CLU_001114_3_1_9"/>
<dbReference type="OrthoDB" id="9810135at2"/>
<dbReference type="Proteomes" id="UP000006371">
    <property type="component" value="Chromosome"/>
</dbReference>
<dbReference type="GO" id="GO:0005829">
    <property type="term" value="C:cytosol"/>
    <property type="evidence" value="ECO:0007669"/>
    <property type="project" value="TreeGrafter"/>
</dbReference>
<dbReference type="GO" id="GO:0033202">
    <property type="term" value="C:DNA helicase complex"/>
    <property type="evidence" value="ECO:0007669"/>
    <property type="project" value="TreeGrafter"/>
</dbReference>
<dbReference type="GO" id="GO:0043138">
    <property type="term" value="F:3'-5' DNA helicase activity"/>
    <property type="evidence" value="ECO:0007669"/>
    <property type="project" value="UniProtKB-UniRule"/>
</dbReference>
<dbReference type="GO" id="GO:0008408">
    <property type="term" value="F:3'-5' exonuclease activity"/>
    <property type="evidence" value="ECO:0007669"/>
    <property type="project" value="UniProtKB-UniRule"/>
</dbReference>
<dbReference type="GO" id="GO:0005524">
    <property type="term" value="F:ATP binding"/>
    <property type="evidence" value="ECO:0007669"/>
    <property type="project" value="UniProtKB-UniRule"/>
</dbReference>
<dbReference type="GO" id="GO:0016887">
    <property type="term" value="F:ATP hydrolysis activity"/>
    <property type="evidence" value="ECO:0007669"/>
    <property type="project" value="RHEA"/>
</dbReference>
<dbReference type="GO" id="GO:0003690">
    <property type="term" value="F:double-stranded DNA binding"/>
    <property type="evidence" value="ECO:0007669"/>
    <property type="project" value="UniProtKB-UniRule"/>
</dbReference>
<dbReference type="GO" id="GO:0000724">
    <property type="term" value="P:double-strand break repair via homologous recombination"/>
    <property type="evidence" value="ECO:0007669"/>
    <property type="project" value="UniProtKB-UniRule"/>
</dbReference>
<dbReference type="CDD" id="cd17932">
    <property type="entry name" value="DEXQc_UvrD"/>
    <property type="match status" value="1"/>
</dbReference>
<dbReference type="FunFam" id="3.40.50.300:FF:001196">
    <property type="entry name" value="ATP-dependent helicase/nuclease subunit A"/>
    <property type="match status" value="1"/>
</dbReference>
<dbReference type="FunFam" id="3.40.50.300:FF:001236">
    <property type="entry name" value="ATP-dependent helicase/nuclease subunit A"/>
    <property type="match status" value="1"/>
</dbReference>
<dbReference type="Gene3D" id="3.90.320.10">
    <property type="match status" value="1"/>
</dbReference>
<dbReference type="Gene3D" id="3.40.50.300">
    <property type="entry name" value="P-loop containing nucleotide triphosphate hydrolases"/>
    <property type="match status" value="4"/>
</dbReference>
<dbReference type="Gene3D" id="1.10.486.10">
    <property type="entry name" value="PCRA, domain 4"/>
    <property type="match status" value="1"/>
</dbReference>
<dbReference type="HAMAP" id="MF_01451">
    <property type="entry name" value="AddA"/>
    <property type="match status" value="1"/>
</dbReference>
<dbReference type="InterPro" id="IPR014152">
    <property type="entry name" value="AddA"/>
</dbReference>
<dbReference type="InterPro" id="IPR014017">
    <property type="entry name" value="DNA_helicase_UvrD-like_C"/>
</dbReference>
<dbReference type="InterPro" id="IPR000212">
    <property type="entry name" value="DNA_helicase_UvrD/REP"/>
</dbReference>
<dbReference type="InterPro" id="IPR027417">
    <property type="entry name" value="P-loop_NTPase"/>
</dbReference>
<dbReference type="InterPro" id="IPR011604">
    <property type="entry name" value="PDDEXK-like_dom_sf"/>
</dbReference>
<dbReference type="InterPro" id="IPR038726">
    <property type="entry name" value="PDDEXK_AddAB-type"/>
</dbReference>
<dbReference type="InterPro" id="IPR011335">
    <property type="entry name" value="Restrct_endonuc-II-like"/>
</dbReference>
<dbReference type="InterPro" id="IPR014016">
    <property type="entry name" value="UvrD-like_ATP-bd"/>
</dbReference>
<dbReference type="NCBIfam" id="TIGR02785">
    <property type="entry name" value="addA_Gpos"/>
    <property type="match status" value="1"/>
</dbReference>
<dbReference type="PANTHER" id="PTHR11070:SF48">
    <property type="entry name" value="ATP-DEPENDENT HELICASE_NUCLEASE SUBUNIT A"/>
    <property type="match status" value="1"/>
</dbReference>
<dbReference type="PANTHER" id="PTHR11070">
    <property type="entry name" value="UVRD / RECB / PCRA DNA HELICASE FAMILY MEMBER"/>
    <property type="match status" value="1"/>
</dbReference>
<dbReference type="Pfam" id="PF12705">
    <property type="entry name" value="PDDEXK_1"/>
    <property type="match status" value="1"/>
</dbReference>
<dbReference type="Pfam" id="PF00580">
    <property type="entry name" value="UvrD-helicase"/>
    <property type="match status" value="1"/>
</dbReference>
<dbReference type="Pfam" id="PF13361">
    <property type="entry name" value="UvrD_C"/>
    <property type="match status" value="1"/>
</dbReference>
<dbReference type="SUPFAM" id="SSF52540">
    <property type="entry name" value="P-loop containing nucleoside triphosphate hydrolases"/>
    <property type="match status" value="1"/>
</dbReference>
<dbReference type="SUPFAM" id="SSF52980">
    <property type="entry name" value="Restriction endonuclease-like"/>
    <property type="match status" value="1"/>
</dbReference>
<dbReference type="PROSITE" id="PS51198">
    <property type="entry name" value="UVRD_HELICASE_ATP_BIND"/>
    <property type="match status" value="1"/>
</dbReference>
<dbReference type="PROSITE" id="PS51217">
    <property type="entry name" value="UVRD_HELICASE_CTER"/>
    <property type="match status" value="1"/>
</dbReference>
<accession>Q49WA6</accession>
<feature type="chain" id="PRO_0000379325" description="ATP-dependent helicase/nuclease subunit A">
    <location>
        <begin position="1"/>
        <end position="1219"/>
    </location>
</feature>
<feature type="domain" description="UvrD-like helicase ATP-binding" evidence="1">
    <location>
        <begin position="12"/>
        <end position="477"/>
    </location>
</feature>
<feature type="domain" description="UvrD-like helicase C-terminal" evidence="1">
    <location>
        <begin position="478"/>
        <end position="786"/>
    </location>
</feature>
<feature type="region of interest" description="Disordered" evidence="2">
    <location>
        <begin position="997"/>
        <end position="1016"/>
    </location>
</feature>
<feature type="compositionally biased region" description="Basic and acidic residues" evidence="2">
    <location>
        <begin position="1004"/>
        <end position="1016"/>
    </location>
</feature>
<feature type="binding site" evidence="1">
    <location>
        <begin position="33"/>
        <end position="40"/>
    </location>
    <ligand>
        <name>ATP</name>
        <dbReference type="ChEBI" id="CHEBI:30616"/>
    </ligand>
</feature>
<proteinExistence type="inferred from homology"/>
<name>ADDA_STAS1</name>
<gene>
    <name evidence="1" type="primary">addA</name>
    <name type="ordered locus">SSP1808</name>
</gene>
<keyword id="KW-0067">ATP-binding</keyword>
<keyword id="KW-0227">DNA damage</keyword>
<keyword id="KW-0234">DNA repair</keyword>
<keyword id="KW-0238">DNA-binding</keyword>
<keyword id="KW-0269">Exonuclease</keyword>
<keyword id="KW-0347">Helicase</keyword>
<keyword id="KW-0378">Hydrolase</keyword>
<keyword id="KW-0413">Isomerase</keyword>
<keyword id="KW-0540">Nuclease</keyword>
<keyword id="KW-0547">Nucleotide-binding</keyword>
<keyword id="KW-1185">Reference proteome</keyword>
<organism>
    <name type="scientific">Staphylococcus saprophyticus subsp. saprophyticus (strain ATCC 15305 / DSM 20229 / NCIMB 8711 / NCTC 7292 / S-41)</name>
    <dbReference type="NCBI Taxonomy" id="342451"/>
    <lineage>
        <taxon>Bacteria</taxon>
        <taxon>Bacillati</taxon>
        <taxon>Bacillota</taxon>
        <taxon>Bacilli</taxon>
        <taxon>Bacillales</taxon>
        <taxon>Staphylococcaceae</taxon>
        <taxon>Staphylococcus</taxon>
    </lineage>
</organism>
<sequence length="1219" mass="142417">MMNAIPVKPTGTRWTDNQWKSIYAKGQDILVAAAAGSGKTAVLVERIIQRIIRDEIDVDKLLVVTFTNASAREMKQRVDQRIQEASIENPDNAHLKNQRVKIHQAQISTLHSFCLKLIQQHYDVLDIDPNFRTSSEAENILLLEQTIDEVLERHYDILDPHFIDLTEQLSSDRNDDQLRNTIKEMYYFSVANPNPLNWLQHLSTPYEDESQQETLFNLLNDLAMIFMNSALEALNKSYDLFMMLEEVDKQVAVLDKERRFLAEAMEGGLLNTQKIAEHQFESRFPAKNKKIKEANEMMIDAYDDGKKHYDDYKALVSKVQEDYFSREAADLKTDMQRLAPRVAYLAQVTADVIEQFNQKKRSRNLLDFSDYEHFALRILMDSNGNPSEIADMYRKQFEEILVDEYQDTNRVQEKIIACIKRGDEADGNLFMVGDVKQSIYKFRQADPSLFIGKYNRFTLDGSEHGMRIDLSQNFRSREEVLTTTNYLFKHMMDEAVGEIVYDDAAQLYYGAPFDHKPHDVQLNMLIEDASSDLNGSEQEAEYIVQQVEKIMSQHEIYDIKTEQYRKPSYKDIVILERSYGQARKIQQAFKDHNIPFHVNSKEGYFEQTEVQLILSFLRTIDNPLQDIYLVGLMRSVIYQFTEDELSNIRVFSPNDDYFYQSIKHYMANDVANKKLVAKLASFLEDIEQYQDYSQSHPVYQLIDKFYNDHYVIQYFSGIIGGKGRRANLYGLFNKAVEFENSSFRGLYQFIRFIDELIERGKDFGEENIVGPNDDVVRMMTIHSSKGLEFPFVIYSGLSRKFRRDDLHRPVILNQSYGLGMAYYDVESNLSYPSLSSVTYKAIAEKEMVSEEMRLIYVALTRAKEQLFLIGRVKDEKTLSQFEQVSVSESHLPVSYRITAQRPIDMIYPILAKYQSSSLPNELRFEQTIEDVDQAMRPYVQLNTDFYEDIASETVTDVSEQRTVADIEMNHSKNEALQAQIHNQLSYEYPYQSAIEKPSKQSVSELKRQHETEQSDTNYDRVRQYRIGSTSYERPAFLSRSKQRKANEIGTLMHTVMQHLPFNKDRLTEEDVNRLVDHLIAQHIIPEDAKQDIRFDDIYNFIASDLYQLIAESDEIYRELPFVVNQNEVDHNKHSEEDASIIQGMIDLIFVKEGQYYFVDYKTDAFNRRRNMSDEEIGAQLRERYKVQMNHYRNTLETILKTDVKGFLYFFKFGQLSIEG</sequence>
<protein>
    <recommendedName>
        <fullName evidence="1">ATP-dependent helicase/nuclease subunit A</fullName>
        <ecNumber evidence="1">3.1.-.-</ecNumber>
        <ecNumber evidence="1">5.6.2.4</ecNumber>
    </recommendedName>
    <alternativeName>
        <fullName evidence="1">ATP-dependent helicase/nuclease AddA</fullName>
    </alternativeName>
    <alternativeName>
        <fullName evidence="1">DNA 3'-5' helicase AddA</fullName>
    </alternativeName>
</protein>
<reference key="1">
    <citation type="journal article" date="2005" name="Proc. Natl. Acad. Sci. U.S.A.">
        <title>Whole genome sequence of Staphylococcus saprophyticus reveals the pathogenesis of uncomplicated urinary tract infection.</title>
        <authorList>
            <person name="Kuroda M."/>
            <person name="Yamashita A."/>
            <person name="Hirakawa H."/>
            <person name="Kumano M."/>
            <person name="Morikawa K."/>
            <person name="Higashide M."/>
            <person name="Maruyama A."/>
            <person name="Inose Y."/>
            <person name="Matoba K."/>
            <person name="Toh H."/>
            <person name="Kuhara S."/>
            <person name="Hattori M."/>
            <person name="Ohta T."/>
        </authorList>
    </citation>
    <scope>NUCLEOTIDE SEQUENCE [LARGE SCALE GENOMIC DNA]</scope>
    <source>
        <strain>ATCC 15305 / DSM 20229 / NCIMB 8711 / NCTC 7292 / S-41</strain>
    </source>
</reference>
<evidence type="ECO:0000255" key="1">
    <source>
        <dbReference type="HAMAP-Rule" id="MF_01451"/>
    </source>
</evidence>
<evidence type="ECO:0000256" key="2">
    <source>
        <dbReference type="SAM" id="MobiDB-lite"/>
    </source>
</evidence>